<dbReference type="EC" id="2.7.2.3" evidence="1"/>
<dbReference type="EMBL" id="CP000821">
    <property type="protein sequence ID" value="ABV35487.1"/>
    <property type="molecule type" value="Genomic_DNA"/>
</dbReference>
<dbReference type="RefSeq" id="WP_012141223.1">
    <property type="nucleotide sequence ID" value="NC_009831.1"/>
</dbReference>
<dbReference type="SMR" id="A8FRL4"/>
<dbReference type="STRING" id="425104.Ssed_0876"/>
<dbReference type="KEGG" id="sse:Ssed_0876"/>
<dbReference type="eggNOG" id="COG0126">
    <property type="taxonomic scope" value="Bacteria"/>
</dbReference>
<dbReference type="HOGENOM" id="CLU_025427_0_2_6"/>
<dbReference type="OrthoDB" id="9808460at2"/>
<dbReference type="UniPathway" id="UPA00109">
    <property type="reaction ID" value="UER00185"/>
</dbReference>
<dbReference type="Proteomes" id="UP000002015">
    <property type="component" value="Chromosome"/>
</dbReference>
<dbReference type="GO" id="GO:0005829">
    <property type="term" value="C:cytosol"/>
    <property type="evidence" value="ECO:0007669"/>
    <property type="project" value="TreeGrafter"/>
</dbReference>
<dbReference type="GO" id="GO:0043531">
    <property type="term" value="F:ADP binding"/>
    <property type="evidence" value="ECO:0007669"/>
    <property type="project" value="TreeGrafter"/>
</dbReference>
<dbReference type="GO" id="GO:0005524">
    <property type="term" value="F:ATP binding"/>
    <property type="evidence" value="ECO:0007669"/>
    <property type="project" value="UniProtKB-KW"/>
</dbReference>
<dbReference type="GO" id="GO:0004618">
    <property type="term" value="F:phosphoglycerate kinase activity"/>
    <property type="evidence" value="ECO:0007669"/>
    <property type="project" value="UniProtKB-UniRule"/>
</dbReference>
<dbReference type="GO" id="GO:0006094">
    <property type="term" value="P:gluconeogenesis"/>
    <property type="evidence" value="ECO:0007669"/>
    <property type="project" value="TreeGrafter"/>
</dbReference>
<dbReference type="GO" id="GO:0006096">
    <property type="term" value="P:glycolytic process"/>
    <property type="evidence" value="ECO:0007669"/>
    <property type="project" value="UniProtKB-UniRule"/>
</dbReference>
<dbReference type="FunFam" id="3.40.50.1260:FF:000001">
    <property type="entry name" value="Phosphoglycerate kinase"/>
    <property type="match status" value="1"/>
</dbReference>
<dbReference type="FunFam" id="3.40.50.1260:FF:000002">
    <property type="entry name" value="Phosphoglycerate kinase"/>
    <property type="match status" value="1"/>
</dbReference>
<dbReference type="Gene3D" id="3.40.50.1260">
    <property type="entry name" value="Phosphoglycerate kinase, N-terminal domain"/>
    <property type="match status" value="2"/>
</dbReference>
<dbReference type="HAMAP" id="MF_00145">
    <property type="entry name" value="Phosphoglyc_kinase"/>
    <property type="match status" value="1"/>
</dbReference>
<dbReference type="InterPro" id="IPR001576">
    <property type="entry name" value="Phosphoglycerate_kinase"/>
</dbReference>
<dbReference type="InterPro" id="IPR015911">
    <property type="entry name" value="Phosphoglycerate_kinase_CS"/>
</dbReference>
<dbReference type="InterPro" id="IPR015824">
    <property type="entry name" value="Phosphoglycerate_kinase_N"/>
</dbReference>
<dbReference type="InterPro" id="IPR036043">
    <property type="entry name" value="Phosphoglycerate_kinase_sf"/>
</dbReference>
<dbReference type="PANTHER" id="PTHR11406">
    <property type="entry name" value="PHOSPHOGLYCERATE KINASE"/>
    <property type="match status" value="1"/>
</dbReference>
<dbReference type="PANTHER" id="PTHR11406:SF23">
    <property type="entry name" value="PHOSPHOGLYCERATE KINASE 1, CHLOROPLASTIC-RELATED"/>
    <property type="match status" value="1"/>
</dbReference>
<dbReference type="Pfam" id="PF00162">
    <property type="entry name" value="PGK"/>
    <property type="match status" value="1"/>
</dbReference>
<dbReference type="PIRSF" id="PIRSF000724">
    <property type="entry name" value="Pgk"/>
    <property type="match status" value="1"/>
</dbReference>
<dbReference type="PRINTS" id="PR00477">
    <property type="entry name" value="PHGLYCKINASE"/>
</dbReference>
<dbReference type="SUPFAM" id="SSF53748">
    <property type="entry name" value="Phosphoglycerate kinase"/>
    <property type="match status" value="1"/>
</dbReference>
<dbReference type="PROSITE" id="PS00111">
    <property type="entry name" value="PGLYCERATE_KINASE"/>
    <property type="match status" value="1"/>
</dbReference>
<sequence length="391" mass="40854">MAIINMSELDLQGKRVLIREDLNVPVSDGVVTSDARLRAALPTIKLALEKGAAVMVMSHLGRPTEGEFNAEFSLQPVVNYLTKALECPVRLANDYLDGVEANVGELVVFENVRFNVGEKKNDEALAKKLAALCDVYVMDAFGTAHRAQASTHGVGLHAPVACAGPLLAGELEALGKAMDNPARPLVAIVGGSKVSTKLTVLESLSGIVDQLVVGGGIANTFIAAAGHEVGKSLYEANLIEEAKRLVANAQSRGGDIPVPTDVVVAGEFSPTASATLKDVSEVTSDDMIFDIGPDSAEALSEILKNAGTIVWNGPVGVFEFDQFGEGTKRIAQAIAESDAFSIAGGGDTLAAVDKYDIADKVSYISTGGGAFLEFLEGKELPAVAMLESRGE</sequence>
<protein>
    <recommendedName>
        <fullName evidence="1">Phosphoglycerate kinase</fullName>
        <ecNumber evidence="1">2.7.2.3</ecNumber>
    </recommendedName>
</protein>
<comment type="catalytic activity">
    <reaction evidence="1">
        <text>(2R)-3-phosphoglycerate + ATP = (2R)-3-phospho-glyceroyl phosphate + ADP</text>
        <dbReference type="Rhea" id="RHEA:14801"/>
        <dbReference type="ChEBI" id="CHEBI:30616"/>
        <dbReference type="ChEBI" id="CHEBI:57604"/>
        <dbReference type="ChEBI" id="CHEBI:58272"/>
        <dbReference type="ChEBI" id="CHEBI:456216"/>
        <dbReference type="EC" id="2.7.2.3"/>
    </reaction>
</comment>
<comment type="pathway">
    <text evidence="1">Carbohydrate degradation; glycolysis; pyruvate from D-glyceraldehyde 3-phosphate: step 2/5.</text>
</comment>
<comment type="subunit">
    <text evidence="1">Monomer.</text>
</comment>
<comment type="subcellular location">
    <subcellularLocation>
        <location evidence="1">Cytoplasm</location>
    </subcellularLocation>
</comment>
<comment type="similarity">
    <text evidence="1">Belongs to the phosphoglycerate kinase family.</text>
</comment>
<name>PGK_SHESH</name>
<gene>
    <name evidence="1" type="primary">pgk</name>
    <name type="ordered locus">Ssed_0876</name>
</gene>
<proteinExistence type="inferred from homology"/>
<organism>
    <name type="scientific">Shewanella sediminis (strain HAW-EB3)</name>
    <dbReference type="NCBI Taxonomy" id="425104"/>
    <lineage>
        <taxon>Bacteria</taxon>
        <taxon>Pseudomonadati</taxon>
        <taxon>Pseudomonadota</taxon>
        <taxon>Gammaproteobacteria</taxon>
        <taxon>Alteromonadales</taxon>
        <taxon>Shewanellaceae</taxon>
        <taxon>Shewanella</taxon>
    </lineage>
</organism>
<accession>A8FRL4</accession>
<keyword id="KW-0067">ATP-binding</keyword>
<keyword id="KW-0963">Cytoplasm</keyword>
<keyword id="KW-0324">Glycolysis</keyword>
<keyword id="KW-0418">Kinase</keyword>
<keyword id="KW-0547">Nucleotide-binding</keyword>
<keyword id="KW-1185">Reference proteome</keyword>
<keyword id="KW-0808">Transferase</keyword>
<reference key="1">
    <citation type="submission" date="2007-08" db="EMBL/GenBank/DDBJ databases">
        <title>Complete sequence of Shewanella sediminis HAW-EB3.</title>
        <authorList>
            <consortium name="US DOE Joint Genome Institute"/>
            <person name="Copeland A."/>
            <person name="Lucas S."/>
            <person name="Lapidus A."/>
            <person name="Barry K."/>
            <person name="Glavina del Rio T."/>
            <person name="Dalin E."/>
            <person name="Tice H."/>
            <person name="Pitluck S."/>
            <person name="Chertkov O."/>
            <person name="Brettin T."/>
            <person name="Bruce D."/>
            <person name="Detter J.C."/>
            <person name="Han C."/>
            <person name="Schmutz J."/>
            <person name="Larimer F."/>
            <person name="Land M."/>
            <person name="Hauser L."/>
            <person name="Kyrpides N."/>
            <person name="Kim E."/>
            <person name="Zhao J.-S."/>
            <person name="Richardson P."/>
        </authorList>
    </citation>
    <scope>NUCLEOTIDE SEQUENCE [LARGE SCALE GENOMIC DNA]</scope>
    <source>
        <strain>HAW-EB3</strain>
    </source>
</reference>
<evidence type="ECO:0000255" key="1">
    <source>
        <dbReference type="HAMAP-Rule" id="MF_00145"/>
    </source>
</evidence>
<feature type="chain" id="PRO_1000076609" description="Phosphoglycerate kinase">
    <location>
        <begin position="1"/>
        <end position="391"/>
    </location>
</feature>
<feature type="binding site" evidence="1">
    <location>
        <begin position="21"/>
        <end position="23"/>
    </location>
    <ligand>
        <name>substrate</name>
    </ligand>
</feature>
<feature type="binding site" evidence="1">
    <location>
        <position position="36"/>
    </location>
    <ligand>
        <name>substrate</name>
    </ligand>
</feature>
<feature type="binding site" evidence="1">
    <location>
        <begin position="59"/>
        <end position="62"/>
    </location>
    <ligand>
        <name>substrate</name>
    </ligand>
</feature>
<feature type="binding site" evidence="1">
    <location>
        <position position="113"/>
    </location>
    <ligand>
        <name>substrate</name>
    </ligand>
</feature>
<feature type="binding site" evidence="1">
    <location>
        <position position="146"/>
    </location>
    <ligand>
        <name>substrate</name>
    </ligand>
</feature>
<feature type="binding site" evidence="1">
    <location>
        <position position="197"/>
    </location>
    <ligand>
        <name>ATP</name>
        <dbReference type="ChEBI" id="CHEBI:30616"/>
    </ligand>
</feature>
<feature type="binding site" evidence="1">
    <location>
        <position position="319"/>
    </location>
    <ligand>
        <name>ATP</name>
        <dbReference type="ChEBI" id="CHEBI:30616"/>
    </ligand>
</feature>
<feature type="binding site" evidence="1">
    <location>
        <begin position="345"/>
        <end position="348"/>
    </location>
    <ligand>
        <name>ATP</name>
        <dbReference type="ChEBI" id="CHEBI:30616"/>
    </ligand>
</feature>